<evidence type="ECO:0000255" key="1">
    <source>
        <dbReference type="HAMAP-Rule" id="MF_00167"/>
    </source>
</evidence>
<reference key="1">
    <citation type="journal article" date="2010" name="J. Bacteriol.">
        <title>Whole genome sequences of two Xylella fastidiosa strains (M12 and M23) causing almond leaf scorch disease in California.</title>
        <authorList>
            <person name="Chen J."/>
            <person name="Xie G."/>
            <person name="Han S."/>
            <person name="Chertkov O."/>
            <person name="Sims D."/>
            <person name="Civerolo E.L."/>
        </authorList>
    </citation>
    <scope>NUCLEOTIDE SEQUENCE [LARGE SCALE GENOMIC DNA]</scope>
    <source>
        <strain>M23</strain>
    </source>
</reference>
<proteinExistence type="inferred from homology"/>
<gene>
    <name evidence="1" type="primary">csrA</name>
    <name type="ordered locus">XfasM23_0088</name>
</gene>
<dbReference type="EMBL" id="CP001011">
    <property type="protein sequence ID" value="ACB91545.1"/>
    <property type="molecule type" value="Genomic_DNA"/>
</dbReference>
<dbReference type="RefSeq" id="WP_004085529.1">
    <property type="nucleotide sequence ID" value="NC_010577.1"/>
</dbReference>
<dbReference type="SMR" id="B2I6K3"/>
<dbReference type="GeneID" id="93903786"/>
<dbReference type="KEGG" id="xfn:XfasM23_0088"/>
<dbReference type="HOGENOM" id="CLU_164837_2_1_6"/>
<dbReference type="Proteomes" id="UP000001698">
    <property type="component" value="Chromosome"/>
</dbReference>
<dbReference type="GO" id="GO:0005829">
    <property type="term" value="C:cytosol"/>
    <property type="evidence" value="ECO:0007669"/>
    <property type="project" value="TreeGrafter"/>
</dbReference>
<dbReference type="GO" id="GO:0048027">
    <property type="term" value="F:mRNA 5'-UTR binding"/>
    <property type="evidence" value="ECO:0007669"/>
    <property type="project" value="UniProtKB-UniRule"/>
</dbReference>
<dbReference type="GO" id="GO:0006402">
    <property type="term" value="P:mRNA catabolic process"/>
    <property type="evidence" value="ECO:0007669"/>
    <property type="project" value="InterPro"/>
</dbReference>
<dbReference type="GO" id="GO:0045947">
    <property type="term" value="P:negative regulation of translational initiation"/>
    <property type="evidence" value="ECO:0007669"/>
    <property type="project" value="UniProtKB-UniRule"/>
</dbReference>
<dbReference type="GO" id="GO:0045948">
    <property type="term" value="P:positive regulation of translational initiation"/>
    <property type="evidence" value="ECO:0007669"/>
    <property type="project" value="UniProtKB-UniRule"/>
</dbReference>
<dbReference type="GO" id="GO:0006109">
    <property type="term" value="P:regulation of carbohydrate metabolic process"/>
    <property type="evidence" value="ECO:0007669"/>
    <property type="project" value="UniProtKB-UniRule"/>
</dbReference>
<dbReference type="FunFam" id="2.60.40.4380:FF:000001">
    <property type="entry name" value="Translational regulator CsrA"/>
    <property type="match status" value="1"/>
</dbReference>
<dbReference type="Gene3D" id="2.60.40.4380">
    <property type="entry name" value="Translational regulator CsrA"/>
    <property type="match status" value="1"/>
</dbReference>
<dbReference type="HAMAP" id="MF_00167">
    <property type="entry name" value="CsrA"/>
    <property type="match status" value="1"/>
</dbReference>
<dbReference type="InterPro" id="IPR003751">
    <property type="entry name" value="CsrA"/>
</dbReference>
<dbReference type="InterPro" id="IPR036107">
    <property type="entry name" value="CsrA_sf"/>
</dbReference>
<dbReference type="NCBIfam" id="TIGR00202">
    <property type="entry name" value="csrA"/>
    <property type="match status" value="1"/>
</dbReference>
<dbReference type="NCBIfam" id="NF002469">
    <property type="entry name" value="PRK01712.1"/>
    <property type="match status" value="1"/>
</dbReference>
<dbReference type="PANTHER" id="PTHR34984">
    <property type="entry name" value="CARBON STORAGE REGULATOR"/>
    <property type="match status" value="1"/>
</dbReference>
<dbReference type="PANTHER" id="PTHR34984:SF1">
    <property type="entry name" value="CARBON STORAGE REGULATOR"/>
    <property type="match status" value="1"/>
</dbReference>
<dbReference type="Pfam" id="PF02599">
    <property type="entry name" value="CsrA"/>
    <property type="match status" value="1"/>
</dbReference>
<dbReference type="SUPFAM" id="SSF117130">
    <property type="entry name" value="CsrA-like"/>
    <property type="match status" value="1"/>
</dbReference>
<feature type="chain" id="PRO_1000097518" description="Translational regulator CsrA">
    <location>
        <begin position="1"/>
        <end position="71"/>
    </location>
</feature>
<protein>
    <recommendedName>
        <fullName evidence="1">Translational regulator CsrA</fullName>
    </recommendedName>
    <alternativeName>
        <fullName evidence="1">Carbon storage regulator</fullName>
    </alternativeName>
</protein>
<organism>
    <name type="scientific">Xylella fastidiosa (strain M23)</name>
    <dbReference type="NCBI Taxonomy" id="405441"/>
    <lineage>
        <taxon>Bacteria</taxon>
        <taxon>Pseudomonadati</taxon>
        <taxon>Pseudomonadota</taxon>
        <taxon>Gammaproteobacteria</taxon>
        <taxon>Lysobacterales</taxon>
        <taxon>Lysobacteraceae</taxon>
        <taxon>Xylella</taxon>
    </lineage>
</organism>
<keyword id="KW-0010">Activator</keyword>
<keyword id="KW-0963">Cytoplasm</keyword>
<keyword id="KW-0678">Repressor</keyword>
<keyword id="KW-0694">RNA-binding</keyword>
<keyword id="KW-0810">Translation regulation</keyword>
<sequence length="71" mass="7672">MLILTRRSGETLMIGDQVTVTVLGVKGNQVRVGINAPKHVAVHREEIYHRIQRGDELACSSGTRGDSGSSI</sequence>
<accession>B2I6K3</accession>
<name>CSRA_XYLF2</name>
<comment type="function">
    <text evidence="1">A key translational regulator that binds mRNA to regulate translation initiation and/or mRNA stability. Mediates global changes in gene expression, shifting from rapid growth to stress survival by linking envelope stress, the stringent response and the catabolite repression systems. Usually binds in the 5'-UTR; binding at or near the Shine-Dalgarno sequence prevents ribosome-binding, repressing translation, binding elsewhere in the 5'-UTR can activate translation and/or stabilize the mRNA. Its function is antagonized by small RNA(s).</text>
</comment>
<comment type="subunit">
    <text evidence="1">Homodimer; the beta-strands of each monomer intercalate to form a hydrophobic core, while the alpha-helices form wings that extend away from the core.</text>
</comment>
<comment type="subcellular location">
    <subcellularLocation>
        <location evidence="1">Cytoplasm</location>
    </subcellularLocation>
</comment>
<comment type="similarity">
    <text evidence="1">Belongs to the CsrA/RsmA family.</text>
</comment>